<feature type="chain" id="PRO_0000041763" description="Cytochrome c oxidase subunit 9, mitochondrial">
    <location>
        <begin position="1"/>
        <end position="57"/>
    </location>
</feature>
<feature type="propeptide" id="PRO_0000041764" description="Removed in mature form" evidence="1">
    <location>
        <begin position="58"/>
        <end position="60"/>
    </location>
</feature>
<feature type="topological domain" description="Mitochondrial matrix" evidence="1">
    <location>
        <begin position="1"/>
        <end position="18"/>
    </location>
</feature>
<feature type="transmembrane region" description="Helical" evidence="2">
    <location>
        <begin position="19"/>
        <end position="37"/>
    </location>
</feature>
<feature type="topological domain" description="Mitochondrial intermembrane" evidence="1">
    <location>
        <begin position="38"/>
        <end position="57"/>
    </location>
</feature>
<keyword id="KW-0472">Membrane</keyword>
<keyword id="KW-0496">Mitochondrion</keyword>
<keyword id="KW-0999">Mitochondrion inner membrane</keyword>
<keyword id="KW-0560">Oxidoreductase</keyword>
<keyword id="KW-1185">Reference proteome</keyword>
<keyword id="KW-0812">Transmembrane</keyword>
<keyword id="KW-1133">Transmembrane helix</keyword>
<accession>Q757F0</accession>
<comment type="function">
    <text evidence="1">Component of the cytochrome c oxidase, the last enzyme in the mitochondrial electron transport chain which drives oxidative phosphorylation. The respiratory chain contains 3 multisubunit complexes succinate dehydrogenase (complex II, CII), ubiquinol-cytochrome c oxidoreductase (cytochrome b-c1 complex, complex III, CIII) and cytochrome c oxidase (complex IV, CIV), that cooperate to transfer electrons derived from NADH and succinate to molecular oxygen, creating an electrochemical gradient over the inner membrane that drives transmembrane transport and the ATP synthase. Cytochrome c oxidase is the component of the respiratory chain that catalyzes the reduction of oxygen to water. Electrons originating from reduced cytochrome c in the intermembrane space (IMS) are transferred via the dinuclear copper A center (CU(A)) of subunit 2 and heme A of subunit 1 to the active site in subunit 1, a binuclear center (BNC) formed by heme A3 and copper B (CU(B)). The BNC reduces molecular oxygen to 2 water molecules using 4 electrons from cytochrome c in the IMS and 4 protons from the mitochondrial matrix.</text>
</comment>
<comment type="pathway">
    <text evidence="1">Energy metabolism; oxidative phosphorylation.</text>
</comment>
<comment type="subunit">
    <text evidence="1">Component of the cytochrome c oxidase (complex IV, CIV), a multisubunit enzyme composed of a catalytic core of 3 subunits and several supernumerary subunits. The complex exists as a monomer or a dimer and forms supercomplexes (SCs) in the inner mitochondrial membrane with ubiquinol-cytochrome c oxidoreductase (cytochrome b-c1 complex, complex III, CIII).</text>
</comment>
<comment type="subcellular location">
    <subcellularLocation>
        <location evidence="1">Mitochondrion inner membrane</location>
        <topology evidence="1">Single-pass membrane protein</topology>
    </subcellularLocation>
</comment>
<comment type="similarity">
    <text evidence="3">Belongs to the fungal cytochrome c oxidase subunit 7a family.</text>
</comment>
<sequence>MSAIAPITGSLKKRIMKDIAVGMGLGTVLGSYWWWGFHKPKIAARENYYTQLAEQKAAEE</sequence>
<dbReference type="EMBL" id="AE016818">
    <property type="protein sequence ID" value="AAS52747.1"/>
    <property type="molecule type" value="Genomic_DNA"/>
</dbReference>
<dbReference type="RefSeq" id="NP_984923.1">
    <property type="nucleotide sequence ID" value="NM_210277.1"/>
</dbReference>
<dbReference type="SMR" id="Q757F0"/>
<dbReference type="FunCoup" id="Q757F0">
    <property type="interactions" value="110"/>
</dbReference>
<dbReference type="STRING" id="284811.Q757F0"/>
<dbReference type="EnsemblFungi" id="AAS52747">
    <property type="protein sequence ID" value="AAS52747"/>
    <property type="gene ID" value="AGOS_AER063W"/>
</dbReference>
<dbReference type="GeneID" id="4621126"/>
<dbReference type="KEGG" id="ago:AGOS_AER063W"/>
<dbReference type="eggNOG" id="ENOG502SBM8">
    <property type="taxonomic scope" value="Eukaryota"/>
</dbReference>
<dbReference type="HOGENOM" id="CLU_196969_0_0_1"/>
<dbReference type="InParanoid" id="Q757F0"/>
<dbReference type="OMA" id="ASYWWWG"/>
<dbReference type="OrthoDB" id="2317211at2759"/>
<dbReference type="UniPathway" id="UPA00705"/>
<dbReference type="Proteomes" id="UP000000591">
    <property type="component" value="Chromosome V"/>
</dbReference>
<dbReference type="GO" id="GO:0005743">
    <property type="term" value="C:mitochondrial inner membrane"/>
    <property type="evidence" value="ECO:0007669"/>
    <property type="project" value="UniProtKB-SubCell"/>
</dbReference>
<dbReference type="GO" id="GO:0016491">
    <property type="term" value="F:oxidoreductase activity"/>
    <property type="evidence" value="ECO:0007669"/>
    <property type="project" value="UniProtKB-KW"/>
</dbReference>
<dbReference type="GO" id="GO:0006123">
    <property type="term" value="P:mitochondrial electron transport, cytochrome c to oxygen"/>
    <property type="evidence" value="ECO:0000318"/>
    <property type="project" value="GO_Central"/>
</dbReference>
<dbReference type="GO" id="GO:1902600">
    <property type="term" value="P:proton transmembrane transport"/>
    <property type="evidence" value="ECO:0007669"/>
    <property type="project" value="GOC"/>
</dbReference>
<dbReference type="CDD" id="cd22888">
    <property type="entry name" value="CcO_VIIa_fungal"/>
    <property type="match status" value="1"/>
</dbReference>
<dbReference type="InterPro" id="IPR014368">
    <property type="entry name" value="Cyt_c_oxidase_su7a_fun"/>
</dbReference>
<dbReference type="PANTHER" id="PTHR28264:SF1">
    <property type="entry name" value="CYTOCHROME C OXIDASE SUBUNIT 6C"/>
    <property type="match status" value="1"/>
</dbReference>
<dbReference type="PANTHER" id="PTHR28264">
    <property type="entry name" value="CYTOCHROME C OXIDASE SUBUNIT 7A"/>
    <property type="match status" value="1"/>
</dbReference>
<dbReference type="PIRSF" id="PIRSF000283">
    <property type="entry name" value="COX9"/>
    <property type="match status" value="1"/>
</dbReference>
<gene>
    <name type="primary">COX9</name>
    <name type="ordered locus">AER063W</name>
</gene>
<organism>
    <name type="scientific">Eremothecium gossypii (strain ATCC 10895 / CBS 109.51 / FGSC 9923 / NRRL Y-1056)</name>
    <name type="common">Yeast</name>
    <name type="synonym">Ashbya gossypii</name>
    <dbReference type="NCBI Taxonomy" id="284811"/>
    <lineage>
        <taxon>Eukaryota</taxon>
        <taxon>Fungi</taxon>
        <taxon>Dikarya</taxon>
        <taxon>Ascomycota</taxon>
        <taxon>Saccharomycotina</taxon>
        <taxon>Saccharomycetes</taxon>
        <taxon>Saccharomycetales</taxon>
        <taxon>Saccharomycetaceae</taxon>
        <taxon>Eremothecium</taxon>
    </lineage>
</organism>
<name>COX9_EREGS</name>
<proteinExistence type="inferred from homology"/>
<reference key="1">
    <citation type="journal article" date="2004" name="Science">
        <title>The Ashbya gossypii genome as a tool for mapping the ancient Saccharomyces cerevisiae genome.</title>
        <authorList>
            <person name="Dietrich F.S."/>
            <person name="Voegeli S."/>
            <person name="Brachat S."/>
            <person name="Lerch A."/>
            <person name="Gates K."/>
            <person name="Steiner S."/>
            <person name="Mohr C."/>
            <person name="Poehlmann R."/>
            <person name="Luedi P."/>
            <person name="Choi S."/>
            <person name="Wing R.A."/>
            <person name="Flavier A."/>
            <person name="Gaffney T.D."/>
            <person name="Philippsen P."/>
        </authorList>
    </citation>
    <scope>NUCLEOTIDE SEQUENCE [LARGE SCALE GENOMIC DNA]</scope>
    <source>
        <strain>ATCC 10895 / CBS 109.51 / FGSC 9923 / NRRL Y-1056</strain>
    </source>
</reference>
<reference key="2">
    <citation type="journal article" date="2013" name="G3 (Bethesda)">
        <title>Genomes of Ashbya fungi isolated from insects reveal four mating-type loci, numerous translocations, lack of transposons, and distinct gene duplications.</title>
        <authorList>
            <person name="Dietrich F.S."/>
            <person name="Voegeli S."/>
            <person name="Kuo S."/>
            <person name="Philippsen P."/>
        </authorList>
    </citation>
    <scope>GENOME REANNOTATION</scope>
    <source>
        <strain>ATCC 10895 / CBS 109.51 / FGSC 9923 / NRRL Y-1056</strain>
    </source>
</reference>
<protein>
    <recommendedName>
        <fullName>Cytochrome c oxidase subunit 9, mitochondrial</fullName>
    </recommendedName>
    <alternativeName>
        <fullName>Cytochrome c oxidase polypeptide VIIA</fullName>
    </alternativeName>
</protein>
<evidence type="ECO:0000250" key="1">
    <source>
        <dbReference type="UniProtKB" id="P07255"/>
    </source>
</evidence>
<evidence type="ECO:0000255" key="2"/>
<evidence type="ECO:0000305" key="3"/>